<comment type="function">
    <text evidence="1">Catalyzes the reductive methylation of 2'-deoxyuridine-5'-monophosphate (dUMP) to 2'-deoxythymidine-5'-monophosphate (dTMP) while utilizing 5,10-methylenetetrahydrofolate (mTHF) as the methyl donor and reductant in the reaction, yielding dihydrofolate (DHF) as a by-product. This enzymatic reaction provides an intracellular de novo source of dTMP, an essential precursor for DNA biosynthesis.</text>
</comment>
<comment type="catalytic activity">
    <reaction evidence="1">
        <text>dUMP + (6R)-5,10-methylene-5,6,7,8-tetrahydrofolate = 7,8-dihydrofolate + dTMP</text>
        <dbReference type="Rhea" id="RHEA:12104"/>
        <dbReference type="ChEBI" id="CHEBI:15636"/>
        <dbReference type="ChEBI" id="CHEBI:57451"/>
        <dbReference type="ChEBI" id="CHEBI:63528"/>
        <dbReference type="ChEBI" id="CHEBI:246422"/>
        <dbReference type="EC" id="2.1.1.45"/>
    </reaction>
</comment>
<comment type="pathway">
    <text evidence="1">Pyrimidine metabolism; dTTP biosynthesis.</text>
</comment>
<comment type="subunit">
    <text evidence="1">Homodimer.</text>
</comment>
<comment type="subcellular location">
    <subcellularLocation>
        <location evidence="1">Cytoplasm</location>
    </subcellularLocation>
</comment>
<comment type="similarity">
    <text evidence="1">Belongs to the thymidylate synthase family. Bacterial-type ThyA subfamily.</text>
</comment>
<sequence length="283" mass="32200">MKQYLALCERIINEGVWVENERTGKRCLTVINADLEYDVAANEFPLITTRKSFWKGAIAELLGYLRGYDNAADFRKLGAKTWDANANENSAWLNNPHRKGHDDMGRVYGVQGRAWAKPDGGVVDQLRKIIDNLSKGVDDRGEILSFYNPGEFHMGCLRPCMHTHNFSLLGDTLYLNSFQRSCDVPLGLNFNQVQVFALLSIVAQITGHKPGKAYHKIVNAHIYEDQLPLMQEVQLKREPFPSPKLSINPDIKSLEDLETWVTMDDFEVTGYQHHEAIQYPFSV</sequence>
<name>TYSY_SHELP</name>
<keyword id="KW-0963">Cytoplasm</keyword>
<keyword id="KW-0489">Methyltransferase</keyword>
<keyword id="KW-0545">Nucleotide biosynthesis</keyword>
<keyword id="KW-1185">Reference proteome</keyword>
<keyword id="KW-0808">Transferase</keyword>
<dbReference type="EC" id="2.1.1.45" evidence="1"/>
<dbReference type="EMBL" id="CP000606">
    <property type="protein sequence ID" value="ABO22912.1"/>
    <property type="molecule type" value="Genomic_DNA"/>
</dbReference>
<dbReference type="RefSeq" id="WP_011864845.1">
    <property type="nucleotide sequence ID" value="NC_009092.1"/>
</dbReference>
<dbReference type="SMR" id="A3QBR4"/>
<dbReference type="STRING" id="323850.Shew_1041"/>
<dbReference type="KEGG" id="slo:Shew_1041"/>
<dbReference type="eggNOG" id="COG0207">
    <property type="taxonomic scope" value="Bacteria"/>
</dbReference>
<dbReference type="HOGENOM" id="CLU_021669_0_1_6"/>
<dbReference type="OrthoDB" id="9774633at2"/>
<dbReference type="UniPathway" id="UPA00575"/>
<dbReference type="Proteomes" id="UP000001558">
    <property type="component" value="Chromosome"/>
</dbReference>
<dbReference type="GO" id="GO:0005829">
    <property type="term" value="C:cytosol"/>
    <property type="evidence" value="ECO:0007669"/>
    <property type="project" value="TreeGrafter"/>
</dbReference>
<dbReference type="GO" id="GO:0004799">
    <property type="term" value="F:thymidylate synthase activity"/>
    <property type="evidence" value="ECO:0007669"/>
    <property type="project" value="UniProtKB-UniRule"/>
</dbReference>
<dbReference type="GO" id="GO:0006231">
    <property type="term" value="P:dTMP biosynthetic process"/>
    <property type="evidence" value="ECO:0007669"/>
    <property type="project" value="UniProtKB-UniRule"/>
</dbReference>
<dbReference type="GO" id="GO:0006235">
    <property type="term" value="P:dTTP biosynthetic process"/>
    <property type="evidence" value="ECO:0007669"/>
    <property type="project" value="UniProtKB-UniRule"/>
</dbReference>
<dbReference type="GO" id="GO:0032259">
    <property type="term" value="P:methylation"/>
    <property type="evidence" value="ECO:0007669"/>
    <property type="project" value="UniProtKB-KW"/>
</dbReference>
<dbReference type="CDD" id="cd00351">
    <property type="entry name" value="TS_Pyrimidine_HMase"/>
    <property type="match status" value="1"/>
</dbReference>
<dbReference type="Gene3D" id="3.30.572.10">
    <property type="entry name" value="Thymidylate synthase/dCMP hydroxymethylase domain"/>
    <property type="match status" value="1"/>
</dbReference>
<dbReference type="HAMAP" id="MF_00008">
    <property type="entry name" value="Thymidy_synth_bact"/>
    <property type="match status" value="1"/>
</dbReference>
<dbReference type="InterPro" id="IPR045097">
    <property type="entry name" value="Thymidate_synth/dCMP_Mease"/>
</dbReference>
<dbReference type="InterPro" id="IPR023451">
    <property type="entry name" value="Thymidate_synth/dCMP_Mease_dom"/>
</dbReference>
<dbReference type="InterPro" id="IPR036926">
    <property type="entry name" value="Thymidate_synth/dCMP_Mease_sf"/>
</dbReference>
<dbReference type="InterPro" id="IPR000398">
    <property type="entry name" value="Thymidylate_synthase"/>
</dbReference>
<dbReference type="NCBIfam" id="NF002498">
    <property type="entry name" value="PRK01827.1-4"/>
    <property type="match status" value="1"/>
</dbReference>
<dbReference type="NCBIfam" id="TIGR03284">
    <property type="entry name" value="thym_sym"/>
    <property type="match status" value="1"/>
</dbReference>
<dbReference type="PANTHER" id="PTHR11548:SF9">
    <property type="entry name" value="THYMIDYLATE SYNTHASE"/>
    <property type="match status" value="1"/>
</dbReference>
<dbReference type="PANTHER" id="PTHR11548">
    <property type="entry name" value="THYMIDYLATE SYNTHASE 1"/>
    <property type="match status" value="1"/>
</dbReference>
<dbReference type="Pfam" id="PF00303">
    <property type="entry name" value="Thymidylat_synt"/>
    <property type="match status" value="1"/>
</dbReference>
<dbReference type="PRINTS" id="PR00108">
    <property type="entry name" value="THYMDSNTHASE"/>
</dbReference>
<dbReference type="SUPFAM" id="SSF55831">
    <property type="entry name" value="Thymidylate synthase/dCMP hydroxymethylase"/>
    <property type="match status" value="1"/>
</dbReference>
<feature type="chain" id="PRO_1000000672" description="Thymidylate synthase">
    <location>
        <begin position="1"/>
        <end position="283"/>
    </location>
</feature>
<feature type="active site" description="Nucleophile" evidence="1">
    <location>
        <position position="160"/>
    </location>
</feature>
<feature type="binding site" evidence="1">
    <location>
        <position position="22"/>
    </location>
    <ligand>
        <name>dUMP</name>
        <dbReference type="ChEBI" id="CHEBI:246422"/>
    </ligand>
</feature>
<feature type="binding site" evidence="1">
    <location>
        <begin position="180"/>
        <end position="183"/>
    </location>
    <ligand>
        <name>dUMP</name>
        <dbReference type="ChEBI" id="CHEBI:246422"/>
    </ligand>
</feature>
<feature type="binding site" evidence="1">
    <location>
        <position position="183"/>
    </location>
    <ligand>
        <name>(6R)-5,10-methylene-5,6,7,8-tetrahydrofolate</name>
        <dbReference type="ChEBI" id="CHEBI:15636"/>
    </ligand>
</feature>
<feature type="binding site" evidence="1">
    <location>
        <position position="191"/>
    </location>
    <ligand>
        <name>dUMP</name>
        <dbReference type="ChEBI" id="CHEBI:246422"/>
    </ligand>
</feature>
<feature type="binding site" evidence="1">
    <location>
        <begin position="221"/>
        <end position="223"/>
    </location>
    <ligand>
        <name>dUMP</name>
        <dbReference type="ChEBI" id="CHEBI:246422"/>
    </ligand>
</feature>
<feature type="binding site" evidence="1">
    <location>
        <position position="282"/>
    </location>
    <ligand>
        <name>(6R)-5,10-methylene-5,6,7,8-tetrahydrofolate</name>
        <dbReference type="ChEBI" id="CHEBI:15636"/>
    </ligand>
</feature>
<protein>
    <recommendedName>
        <fullName evidence="1">Thymidylate synthase</fullName>
        <shortName evidence="1">TS</shortName>
        <shortName evidence="1">TSase</shortName>
        <ecNumber evidence="1">2.1.1.45</ecNumber>
    </recommendedName>
</protein>
<proteinExistence type="inferred from homology"/>
<organism>
    <name type="scientific">Shewanella loihica (strain ATCC BAA-1088 / PV-4)</name>
    <dbReference type="NCBI Taxonomy" id="323850"/>
    <lineage>
        <taxon>Bacteria</taxon>
        <taxon>Pseudomonadati</taxon>
        <taxon>Pseudomonadota</taxon>
        <taxon>Gammaproteobacteria</taxon>
        <taxon>Alteromonadales</taxon>
        <taxon>Shewanellaceae</taxon>
        <taxon>Shewanella</taxon>
    </lineage>
</organism>
<gene>
    <name evidence="1" type="primary">thyA</name>
    <name type="ordered locus">Shew_1041</name>
</gene>
<reference key="1">
    <citation type="submission" date="2007-03" db="EMBL/GenBank/DDBJ databases">
        <title>Complete sequence of Shewanella loihica PV-4.</title>
        <authorList>
            <consortium name="US DOE Joint Genome Institute"/>
            <person name="Copeland A."/>
            <person name="Lucas S."/>
            <person name="Lapidus A."/>
            <person name="Barry K."/>
            <person name="Detter J.C."/>
            <person name="Glavina del Rio T."/>
            <person name="Hammon N."/>
            <person name="Israni S."/>
            <person name="Dalin E."/>
            <person name="Tice H."/>
            <person name="Pitluck S."/>
            <person name="Chain P."/>
            <person name="Malfatti S."/>
            <person name="Shin M."/>
            <person name="Vergez L."/>
            <person name="Schmutz J."/>
            <person name="Larimer F."/>
            <person name="Land M."/>
            <person name="Hauser L."/>
            <person name="Kyrpides N."/>
            <person name="Mikhailova N."/>
            <person name="Romine M.F."/>
            <person name="Serres G."/>
            <person name="Fredrickson J."/>
            <person name="Tiedje J."/>
            <person name="Richardson P."/>
        </authorList>
    </citation>
    <scope>NUCLEOTIDE SEQUENCE [LARGE SCALE GENOMIC DNA]</scope>
    <source>
        <strain>ATCC BAA-1088 / PV-4</strain>
    </source>
</reference>
<accession>A3QBR4</accession>
<evidence type="ECO:0000255" key="1">
    <source>
        <dbReference type="HAMAP-Rule" id="MF_00008"/>
    </source>
</evidence>